<reference key="1">
    <citation type="journal article" date="1999" name="Nature">
        <title>Sequence and analysis of chromosome 4 of the plant Arabidopsis thaliana.</title>
        <authorList>
            <person name="Mayer K.F.X."/>
            <person name="Schueller C."/>
            <person name="Wambutt R."/>
            <person name="Murphy G."/>
            <person name="Volckaert G."/>
            <person name="Pohl T."/>
            <person name="Duesterhoeft A."/>
            <person name="Stiekema W."/>
            <person name="Entian K.-D."/>
            <person name="Terryn N."/>
            <person name="Harris B."/>
            <person name="Ansorge W."/>
            <person name="Brandt P."/>
            <person name="Grivell L.A."/>
            <person name="Rieger M."/>
            <person name="Weichselgartner M."/>
            <person name="de Simone V."/>
            <person name="Obermaier B."/>
            <person name="Mache R."/>
            <person name="Mueller M."/>
            <person name="Kreis M."/>
            <person name="Delseny M."/>
            <person name="Puigdomenech P."/>
            <person name="Watson M."/>
            <person name="Schmidtheini T."/>
            <person name="Reichert B."/>
            <person name="Portetelle D."/>
            <person name="Perez-Alonso M."/>
            <person name="Boutry M."/>
            <person name="Bancroft I."/>
            <person name="Vos P."/>
            <person name="Hoheisel J."/>
            <person name="Zimmermann W."/>
            <person name="Wedler H."/>
            <person name="Ridley P."/>
            <person name="Langham S.-A."/>
            <person name="McCullagh B."/>
            <person name="Bilham L."/>
            <person name="Robben J."/>
            <person name="van der Schueren J."/>
            <person name="Grymonprez B."/>
            <person name="Chuang Y.-J."/>
            <person name="Vandenbussche F."/>
            <person name="Braeken M."/>
            <person name="Weltjens I."/>
            <person name="Voet M."/>
            <person name="Bastiaens I."/>
            <person name="Aert R."/>
            <person name="Defoor E."/>
            <person name="Weitzenegger T."/>
            <person name="Bothe G."/>
            <person name="Ramsperger U."/>
            <person name="Hilbert H."/>
            <person name="Braun M."/>
            <person name="Holzer E."/>
            <person name="Brandt A."/>
            <person name="Peters S."/>
            <person name="van Staveren M."/>
            <person name="Dirkse W."/>
            <person name="Mooijman P."/>
            <person name="Klein Lankhorst R."/>
            <person name="Rose M."/>
            <person name="Hauf J."/>
            <person name="Koetter P."/>
            <person name="Berneiser S."/>
            <person name="Hempel S."/>
            <person name="Feldpausch M."/>
            <person name="Lamberth S."/>
            <person name="Van den Daele H."/>
            <person name="De Keyser A."/>
            <person name="Buysshaert C."/>
            <person name="Gielen J."/>
            <person name="Villarroel R."/>
            <person name="De Clercq R."/>
            <person name="van Montagu M."/>
            <person name="Rogers J."/>
            <person name="Cronin A."/>
            <person name="Quail M.A."/>
            <person name="Bray-Allen S."/>
            <person name="Clark L."/>
            <person name="Doggett J."/>
            <person name="Hall S."/>
            <person name="Kay M."/>
            <person name="Lennard N."/>
            <person name="McLay K."/>
            <person name="Mayes R."/>
            <person name="Pettett A."/>
            <person name="Rajandream M.A."/>
            <person name="Lyne M."/>
            <person name="Benes V."/>
            <person name="Rechmann S."/>
            <person name="Borkova D."/>
            <person name="Bloecker H."/>
            <person name="Scharfe M."/>
            <person name="Grimm M."/>
            <person name="Loehnert T.-H."/>
            <person name="Dose S."/>
            <person name="de Haan M."/>
            <person name="Maarse A.C."/>
            <person name="Schaefer M."/>
            <person name="Mueller-Auer S."/>
            <person name="Gabel C."/>
            <person name="Fuchs M."/>
            <person name="Fartmann B."/>
            <person name="Granderath K."/>
            <person name="Dauner D."/>
            <person name="Herzl A."/>
            <person name="Neumann S."/>
            <person name="Argiriou A."/>
            <person name="Vitale D."/>
            <person name="Liguori R."/>
            <person name="Piravandi E."/>
            <person name="Massenet O."/>
            <person name="Quigley F."/>
            <person name="Clabauld G."/>
            <person name="Muendlein A."/>
            <person name="Felber R."/>
            <person name="Schnabl S."/>
            <person name="Hiller R."/>
            <person name="Schmidt W."/>
            <person name="Lecharny A."/>
            <person name="Aubourg S."/>
            <person name="Chefdor F."/>
            <person name="Cooke R."/>
            <person name="Berger C."/>
            <person name="Monfort A."/>
            <person name="Casacuberta E."/>
            <person name="Gibbons T."/>
            <person name="Weber N."/>
            <person name="Vandenbol M."/>
            <person name="Bargues M."/>
            <person name="Terol J."/>
            <person name="Torres A."/>
            <person name="Perez-Perez A."/>
            <person name="Purnelle B."/>
            <person name="Bent E."/>
            <person name="Johnson S."/>
            <person name="Tacon D."/>
            <person name="Jesse T."/>
            <person name="Heijnen L."/>
            <person name="Schwarz S."/>
            <person name="Scholler P."/>
            <person name="Heber S."/>
            <person name="Francs P."/>
            <person name="Bielke C."/>
            <person name="Frishman D."/>
            <person name="Haase D."/>
            <person name="Lemcke K."/>
            <person name="Mewes H.-W."/>
            <person name="Stocker S."/>
            <person name="Zaccaria P."/>
            <person name="Bevan M."/>
            <person name="Wilson R.K."/>
            <person name="de la Bastide M."/>
            <person name="Habermann K."/>
            <person name="Parnell L."/>
            <person name="Dedhia N."/>
            <person name="Gnoj L."/>
            <person name="Schutz K."/>
            <person name="Huang E."/>
            <person name="Spiegel L."/>
            <person name="Sekhon M."/>
            <person name="Murray J."/>
            <person name="Sheet P."/>
            <person name="Cordes M."/>
            <person name="Abu-Threideh J."/>
            <person name="Stoneking T."/>
            <person name="Kalicki J."/>
            <person name="Graves T."/>
            <person name="Harmon G."/>
            <person name="Edwards J."/>
            <person name="Latreille P."/>
            <person name="Courtney L."/>
            <person name="Cloud J."/>
            <person name="Abbott A."/>
            <person name="Scott K."/>
            <person name="Johnson D."/>
            <person name="Minx P."/>
            <person name="Bentley D."/>
            <person name="Fulton B."/>
            <person name="Miller N."/>
            <person name="Greco T."/>
            <person name="Kemp K."/>
            <person name="Kramer J."/>
            <person name="Fulton L."/>
            <person name="Mardis E."/>
            <person name="Dante M."/>
            <person name="Pepin K."/>
            <person name="Hillier L.W."/>
            <person name="Nelson J."/>
            <person name="Spieth J."/>
            <person name="Ryan E."/>
            <person name="Andrews S."/>
            <person name="Geisel C."/>
            <person name="Layman D."/>
            <person name="Du H."/>
            <person name="Ali J."/>
            <person name="Berghoff A."/>
            <person name="Jones K."/>
            <person name="Drone K."/>
            <person name="Cotton M."/>
            <person name="Joshu C."/>
            <person name="Antonoiu B."/>
            <person name="Zidanic M."/>
            <person name="Strong C."/>
            <person name="Sun H."/>
            <person name="Lamar B."/>
            <person name="Yordan C."/>
            <person name="Ma P."/>
            <person name="Zhong J."/>
            <person name="Preston R."/>
            <person name="Vil D."/>
            <person name="Shekher M."/>
            <person name="Matero A."/>
            <person name="Shah R."/>
            <person name="Swaby I.K."/>
            <person name="O'Shaughnessy A."/>
            <person name="Rodriguez M."/>
            <person name="Hoffman J."/>
            <person name="Till S."/>
            <person name="Granat S."/>
            <person name="Shohdy N."/>
            <person name="Hasegawa A."/>
            <person name="Hameed A."/>
            <person name="Lodhi M."/>
            <person name="Johnson A."/>
            <person name="Chen E."/>
            <person name="Marra M.A."/>
            <person name="Martienssen R."/>
            <person name="McCombie W.R."/>
        </authorList>
    </citation>
    <scope>NUCLEOTIDE SEQUENCE [LARGE SCALE GENOMIC DNA]</scope>
    <source>
        <strain>cv. Columbia</strain>
    </source>
</reference>
<reference key="2">
    <citation type="journal article" date="2017" name="Plant J.">
        <title>Araport11: a complete reannotation of the Arabidopsis thaliana reference genome.</title>
        <authorList>
            <person name="Cheng C.Y."/>
            <person name="Krishnakumar V."/>
            <person name="Chan A.P."/>
            <person name="Thibaud-Nissen F."/>
            <person name="Schobel S."/>
            <person name="Town C.D."/>
        </authorList>
    </citation>
    <scope>GENOME REANNOTATION</scope>
    <source>
        <strain>cv. Columbia</strain>
    </source>
</reference>
<reference key="3">
    <citation type="submission" date="2005-03" db="EMBL/GenBank/DDBJ databases">
        <title>Large-scale analysis of RIKEN Arabidopsis full-length (RAFL) cDNAs.</title>
        <authorList>
            <person name="Totoki Y."/>
            <person name="Seki M."/>
            <person name="Ishida J."/>
            <person name="Nakajima M."/>
            <person name="Enju A."/>
            <person name="Kamiya A."/>
            <person name="Narusaka M."/>
            <person name="Shin-i T."/>
            <person name="Nakagawa M."/>
            <person name="Sakamoto N."/>
            <person name="Oishi K."/>
            <person name="Kohara Y."/>
            <person name="Kobayashi M."/>
            <person name="Toyoda A."/>
            <person name="Sakaki Y."/>
            <person name="Sakurai T."/>
            <person name="Iida K."/>
            <person name="Akiyama K."/>
            <person name="Satou M."/>
            <person name="Toyoda T."/>
            <person name="Konagaya A."/>
            <person name="Carninci P."/>
            <person name="Kawai J."/>
            <person name="Hayashizaki Y."/>
            <person name="Shinozaki K."/>
        </authorList>
    </citation>
    <scope>NUCLEOTIDE SEQUENCE [LARGE SCALE MRNA]</scope>
    <source>
        <strain>cv. Columbia</strain>
    </source>
</reference>
<reference key="4">
    <citation type="submission" date="2002-03" db="EMBL/GenBank/DDBJ databases">
        <title>Full-length cDNA from Arabidopsis thaliana.</title>
        <authorList>
            <person name="Brover V.V."/>
            <person name="Troukhan M.E."/>
            <person name="Alexandrov N.A."/>
            <person name="Lu Y.-P."/>
            <person name="Flavell R.B."/>
            <person name="Feldmann K.A."/>
        </authorList>
    </citation>
    <scope>NUCLEOTIDE SEQUENCE [LARGE SCALE MRNA]</scope>
</reference>
<gene>
    <name type="ordered locus">At4g13230</name>
    <name type="ORF">F17N18.16</name>
    <name type="ORF">F17N18.200</name>
</gene>
<organism>
    <name type="scientific">Arabidopsis thaliana</name>
    <name type="common">Mouse-ear cress</name>
    <dbReference type="NCBI Taxonomy" id="3702"/>
    <lineage>
        <taxon>Eukaryota</taxon>
        <taxon>Viridiplantae</taxon>
        <taxon>Streptophyta</taxon>
        <taxon>Embryophyta</taxon>
        <taxon>Tracheophyta</taxon>
        <taxon>Spermatophyta</taxon>
        <taxon>Magnoliopsida</taxon>
        <taxon>eudicotyledons</taxon>
        <taxon>Gunneridae</taxon>
        <taxon>Pentapetalae</taxon>
        <taxon>rosids</taxon>
        <taxon>malvids</taxon>
        <taxon>Brassicales</taxon>
        <taxon>Brassicaceae</taxon>
        <taxon>Camelineae</taxon>
        <taxon>Arabidopsis</taxon>
    </lineage>
</organism>
<evidence type="ECO:0000255" key="1"/>
<evidence type="ECO:0000256" key="2">
    <source>
        <dbReference type="SAM" id="MobiDB-lite"/>
    </source>
</evidence>
<evidence type="ECO:0000305" key="3"/>
<proteinExistence type="evidence at transcript level"/>
<dbReference type="EMBL" id="AL049751">
    <property type="protein sequence ID" value="CAB41933.1"/>
    <property type="status" value="ALT_SEQ"/>
    <property type="molecule type" value="Genomic_DNA"/>
</dbReference>
<dbReference type="EMBL" id="AL161535">
    <property type="protein sequence ID" value="CAB78365.1"/>
    <property type="status" value="ALT_SEQ"/>
    <property type="molecule type" value="Genomic_DNA"/>
</dbReference>
<dbReference type="EMBL" id="CP002687">
    <property type="protein sequence ID" value="AEE83248.1"/>
    <property type="molecule type" value="Genomic_DNA"/>
</dbReference>
<dbReference type="EMBL" id="AK220810">
    <property type="protein sequence ID" value="BAD94087.1"/>
    <property type="molecule type" value="mRNA"/>
</dbReference>
<dbReference type="EMBL" id="AY084909">
    <property type="protein sequence ID" value="AAM61472.1"/>
    <property type="molecule type" value="mRNA"/>
</dbReference>
<dbReference type="PIR" id="T07703">
    <property type="entry name" value="T07703"/>
</dbReference>
<dbReference type="RefSeq" id="NP_567398.1">
    <property type="nucleotide sequence ID" value="NM_117393.3"/>
</dbReference>
<dbReference type="SMR" id="Q8LFD5"/>
<dbReference type="FunCoup" id="Q8LFD5">
    <property type="interactions" value="8"/>
</dbReference>
<dbReference type="STRING" id="3702.Q8LFD5"/>
<dbReference type="PaxDb" id="3702-AT4G13230.1"/>
<dbReference type="ProteomicsDB" id="242998"/>
<dbReference type="EnsemblPlants" id="AT4G13230.1">
    <property type="protein sequence ID" value="AT4G13230.1"/>
    <property type="gene ID" value="AT4G13230"/>
</dbReference>
<dbReference type="GeneID" id="826939"/>
<dbReference type="Gramene" id="AT4G13230.1">
    <property type="protein sequence ID" value="AT4G13230.1"/>
    <property type="gene ID" value="AT4G13230"/>
</dbReference>
<dbReference type="KEGG" id="ath:AT4G13230"/>
<dbReference type="Araport" id="AT4G13230"/>
<dbReference type="TAIR" id="AT4G13230"/>
<dbReference type="eggNOG" id="ENOG502S573">
    <property type="taxonomic scope" value="Eukaryota"/>
</dbReference>
<dbReference type="HOGENOM" id="CLU_2018404_0_0_1"/>
<dbReference type="InParanoid" id="Q8LFD5"/>
<dbReference type="OMA" id="IFSRWIQ"/>
<dbReference type="OrthoDB" id="756017at2759"/>
<dbReference type="PhylomeDB" id="Q8LFD5"/>
<dbReference type="PRO" id="PR:Q8LFD5"/>
<dbReference type="Proteomes" id="UP000006548">
    <property type="component" value="Chromosome 4"/>
</dbReference>
<dbReference type="ExpressionAtlas" id="Q8LFD5">
    <property type="expression patterns" value="baseline and differential"/>
</dbReference>
<dbReference type="GO" id="GO:0005829">
    <property type="term" value="C:cytosol"/>
    <property type="evidence" value="ECO:0007005"/>
    <property type="project" value="TAIR"/>
</dbReference>
<dbReference type="Gene3D" id="1.20.120.20">
    <property type="entry name" value="Apolipoprotein"/>
    <property type="match status" value="1"/>
</dbReference>
<dbReference type="SUPFAM" id="SSF58113">
    <property type="entry name" value="Apolipoprotein A-I"/>
    <property type="match status" value="1"/>
</dbReference>
<sequence>MTSFAVVARLITRAPRVRASVPTRLVHGTTSTRKDSVCDKATEAQQKVAKKADEGAQTISDAAGNLKDKAKNTAEEAWDKVKDTTEKIKDTVTGKTEETKESIKATAKTVERSMNTKNLK</sequence>
<feature type="signal peptide" evidence="1">
    <location>
        <begin position="1"/>
        <end position="19"/>
    </location>
</feature>
<feature type="chain" id="PRO_0000374078" description="Uncharacterized protein At4g13230">
    <location>
        <begin position="20"/>
        <end position="120"/>
    </location>
</feature>
<feature type="region of interest" description="Disordered" evidence="2">
    <location>
        <begin position="48"/>
        <end position="71"/>
    </location>
</feature>
<feature type="region of interest" description="Disordered" evidence="2">
    <location>
        <begin position="90"/>
        <end position="120"/>
    </location>
</feature>
<feature type="compositionally biased region" description="Basic and acidic residues" evidence="2">
    <location>
        <begin position="90"/>
        <end position="103"/>
    </location>
</feature>
<comment type="sequence caution" evidence="3">
    <conflict type="erroneous gene model prediction">
        <sequence resource="EMBL-CDS" id="CAB41933"/>
    </conflict>
    <text>The predicted gene has been split into 2 genes: At4g13230 and At4g13235.</text>
</comment>
<comment type="sequence caution" evidence="3">
    <conflict type="erroneous gene model prediction">
        <sequence resource="EMBL-CDS" id="CAB78365"/>
    </conflict>
    <text>The predicted gene has been split into 2 genes: At4g13230 and At4g13235.</text>
</comment>
<accession>Q8LFD5</accession>
<accession>Q9SVQ4</accession>
<keyword id="KW-1185">Reference proteome</keyword>
<keyword id="KW-0732">Signal</keyword>
<name>Y4323_ARATH</name>
<protein>
    <recommendedName>
        <fullName>Uncharacterized protein At4g13230</fullName>
    </recommendedName>
</protein>